<dbReference type="EMBL" id="CP000489">
    <property type="protein sequence ID" value="ABL70883.1"/>
    <property type="molecule type" value="Genomic_DNA"/>
</dbReference>
<dbReference type="RefSeq" id="WP_011749074.1">
    <property type="nucleotide sequence ID" value="NC_008686.1"/>
</dbReference>
<dbReference type="SMR" id="A1B5T9"/>
<dbReference type="STRING" id="318586.Pden_2799"/>
<dbReference type="EnsemblBacteria" id="ABL70883">
    <property type="protein sequence ID" value="ABL70883"/>
    <property type="gene ID" value="Pden_2799"/>
</dbReference>
<dbReference type="GeneID" id="93451197"/>
<dbReference type="KEGG" id="pde:Pden_2799"/>
<dbReference type="eggNOG" id="COG0858">
    <property type="taxonomic scope" value="Bacteria"/>
</dbReference>
<dbReference type="HOGENOM" id="CLU_089475_1_0_5"/>
<dbReference type="OrthoDB" id="9805051at2"/>
<dbReference type="Proteomes" id="UP000000361">
    <property type="component" value="Chromosome 1"/>
</dbReference>
<dbReference type="GO" id="GO:0005829">
    <property type="term" value="C:cytosol"/>
    <property type="evidence" value="ECO:0007669"/>
    <property type="project" value="TreeGrafter"/>
</dbReference>
<dbReference type="GO" id="GO:0043024">
    <property type="term" value="F:ribosomal small subunit binding"/>
    <property type="evidence" value="ECO:0007669"/>
    <property type="project" value="TreeGrafter"/>
</dbReference>
<dbReference type="GO" id="GO:0030490">
    <property type="term" value="P:maturation of SSU-rRNA"/>
    <property type="evidence" value="ECO:0007669"/>
    <property type="project" value="UniProtKB-UniRule"/>
</dbReference>
<dbReference type="Gene3D" id="3.30.300.20">
    <property type="match status" value="1"/>
</dbReference>
<dbReference type="HAMAP" id="MF_00003">
    <property type="entry name" value="RbfA"/>
    <property type="match status" value="1"/>
</dbReference>
<dbReference type="InterPro" id="IPR015946">
    <property type="entry name" value="KH_dom-like_a/b"/>
</dbReference>
<dbReference type="InterPro" id="IPR000238">
    <property type="entry name" value="RbfA"/>
</dbReference>
<dbReference type="InterPro" id="IPR023799">
    <property type="entry name" value="RbfA_dom_sf"/>
</dbReference>
<dbReference type="InterPro" id="IPR020053">
    <property type="entry name" value="Ribosome-bd_factorA_CS"/>
</dbReference>
<dbReference type="NCBIfam" id="NF001802">
    <property type="entry name" value="PRK00521.2-5"/>
    <property type="match status" value="1"/>
</dbReference>
<dbReference type="NCBIfam" id="TIGR00082">
    <property type="entry name" value="rbfA"/>
    <property type="match status" value="1"/>
</dbReference>
<dbReference type="PANTHER" id="PTHR33515">
    <property type="entry name" value="RIBOSOME-BINDING FACTOR A, CHLOROPLASTIC-RELATED"/>
    <property type="match status" value="1"/>
</dbReference>
<dbReference type="PANTHER" id="PTHR33515:SF1">
    <property type="entry name" value="RIBOSOME-BINDING FACTOR A, CHLOROPLASTIC-RELATED"/>
    <property type="match status" value="1"/>
</dbReference>
<dbReference type="Pfam" id="PF02033">
    <property type="entry name" value="RBFA"/>
    <property type="match status" value="1"/>
</dbReference>
<dbReference type="SUPFAM" id="SSF89919">
    <property type="entry name" value="Ribosome-binding factor A, RbfA"/>
    <property type="match status" value="1"/>
</dbReference>
<dbReference type="PROSITE" id="PS01319">
    <property type="entry name" value="RBFA"/>
    <property type="match status" value="1"/>
</dbReference>
<comment type="function">
    <text evidence="1">One of several proteins that assist in the late maturation steps of the functional core of the 30S ribosomal subunit. Associates with free 30S ribosomal subunits (but not with 30S subunits that are part of 70S ribosomes or polysomes). Required for efficient processing of 16S rRNA. May interact with the 5'-terminal helix region of 16S rRNA.</text>
</comment>
<comment type="subunit">
    <text evidence="1">Monomer. Binds 30S ribosomal subunits, but not 50S ribosomal subunits or 70S ribosomes.</text>
</comment>
<comment type="subcellular location">
    <subcellularLocation>
        <location evidence="1">Cytoplasm</location>
    </subcellularLocation>
</comment>
<comment type="similarity">
    <text evidence="1">Belongs to the RbfA family.</text>
</comment>
<organism>
    <name type="scientific">Paracoccus denitrificans (strain Pd 1222)</name>
    <dbReference type="NCBI Taxonomy" id="318586"/>
    <lineage>
        <taxon>Bacteria</taxon>
        <taxon>Pseudomonadati</taxon>
        <taxon>Pseudomonadota</taxon>
        <taxon>Alphaproteobacteria</taxon>
        <taxon>Rhodobacterales</taxon>
        <taxon>Paracoccaceae</taxon>
        <taxon>Paracoccus</taxon>
    </lineage>
</organism>
<accession>A1B5T9</accession>
<feature type="chain" id="PRO_1000000158" description="Ribosome-binding factor A">
    <location>
        <begin position="1"/>
        <end position="138"/>
    </location>
</feature>
<sequence length="138" mass="15678">MAQNRFHSGTGPSQRQLRVGELIRRTLSDVLLRGDVHDPELNRHSITVGEVRTSPDLKVATAYVLPLGGHDAEEALAALRRNAGELRHLVAKAMTLKYAPQLRFVLDETFDRMDDTRRLLSEDRVRRDVESHPEDDED</sequence>
<keyword id="KW-0963">Cytoplasm</keyword>
<keyword id="KW-1185">Reference proteome</keyword>
<keyword id="KW-0690">Ribosome biogenesis</keyword>
<proteinExistence type="inferred from homology"/>
<evidence type="ECO:0000255" key="1">
    <source>
        <dbReference type="HAMAP-Rule" id="MF_00003"/>
    </source>
</evidence>
<gene>
    <name evidence="1" type="primary">rbfA</name>
    <name type="ordered locus">Pden_2799</name>
</gene>
<name>RBFA_PARDP</name>
<reference key="1">
    <citation type="submission" date="2006-12" db="EMBL/GenBank/DDBJ databases">
        <title>Complete sequence of chromosome 1 of Paracoccus denitrificans PD1222.</title>
        <authorList>
            <person name="Copeland A."/>
            <person name="Lucas S."/>
            <person name="Lapidus A."/>
            <person name="Barry K."/>
            <person name="Detter J.C."/>
            <person name="Glavina del Rio T."/>
            <person name="Hammon N."/>
            <person name="Israni S."/>
            <person name="Dalin E."/>
            <person name="Tice H."/>
            <person name="Pitluck S."/>
            <person name="Munk A.C."/>
            <person name="Brettin T."/>
            <person name="Bruce D."/>
            <person name="Han C."/>
            <person name="Tapia R."/>
            <person name="Gilna P."/>
            <person name="Schmutz J."/>
            <person name="Larimer F."/>
            <person name="Land M."/>
            <person name="Hauser L."/>
            <person name="Kyrpides N."/>
            <person name="Lykidis A."/>
            <person name="Spiro S."/>
            <person name="Richardson D.J."/>
            <person name="Moir J.W.B."/>
            <person name="Ferguson S.J."/>
            <person name="van Spanning R.J.M."/>
            <person name="Richardson P."/>
        </authorList>
    </citation>
    <scope>NUCLEOTIDE SEQUENCE [LARGE SCALE GENOMIC DNA]</scope>
    <source>
        <strain>Pd 1222</strain>
    </source>
</reference>
<protein>
    <recommendedName>
        <fullName evidence="1">Ribosome-binding factor A</fullName>
    </recommendedName>
</protein>